<gene>
    <name type="primary">asa1</name>
</gene>
<accession>Q06304</accession>
<proteinExistence type="inferred from homology"/>
<reference key="1">
    <citation type="journal article" date="1992" name="Microb. Pathog.">
        <title>Nucleotide sequences and characterization of haemolysin genes from Aeromonas hydrophila and Aeromonas sobria.</title>
        <authorList>
            <person name="Hirono I."/>
            <person name="Aoki T."/>
            <person name="Asao T."/>
            <person name="Kozaki S."/>
        </authorList>
    </citation>
    <scope>NUCLEOTIDE SEQUENCE [GENOMIC DNA]</scope>
    <scope>FUNCTION</scope>
    <scope>SUBCELLULAR LOCATION</scope>
    <source>
        <strain>33</strain>
    </source>
</reference>
<dbReference type="EMBL" id="X65046">
    <property type="protein sequence ID" value="CAA46182.1"/>
    <property type="molecule type" value="Genomic_DNA"/>
</dbReference>
<dbReference type="PIR" id="I39682">
    <property type="entry name" value="S26576"/>
</dbReference>
<dbReference type="SMR" id="Q06304"/>
<dbReference type="STRING" id="646.BJD16_10710"/>
<dbReference type="GO" id="GO:0005576">
    <property type="term" value="C:extracellular region"/>
    <property type="evidence" value="ECO:0007669"/>
    <property type="project" value="UniProtKB-SubCell"/>
</dbReference>
<dbReference type="GO" id="GO:0020002">
    <property type="term" value="C:host cell plasma membrane"/>
    <property type="evidence" value="ECO:0007669"/>
    <property type="project" value="UniProtKB-SubCell"/>
</dbReference>
<dbReference type="GO" id="GO:0016020">
    <property type="term" value="C:membrane"/>
    <property type="evidence" value="ECO:0007669"/>
    <property type="project" value="UniProtKB-KW"/>
</dbReference>
<dbReference type="GO" id="GO:0090729">
    <property type="term" value="F:toxin activity"/>
    <property type="evidence" value="ECO:0007669"/>
    <property type="project" value="UniProtKB-KW"/>
</dbReference>
<dbReference type="GO" id="GO:0031640">
    <property type="term" value="P:killing of cells of another organism"/>
    <property type="evidence" value="ECO:0007669"/>
    <property type="project" value="UniProtKB-KW"/>
</dbReference>
<dbReference type="CDD" id="cd20218">
    <property type="entry name" value="PFM_aerolysin"/>
    <property type="match status" value="1"/>
</dbReference>
<dbReference type="Gene3D" id="3.10.40.10">
    <property type="entry name" value="Aerolysin/Pertussis toxin (APT), N-terminal domain"/>
    <property type="match status" value="1"/>
</dbReference>
<dbReference type="Gene3D" id="3.30.412.10">
    <property type="entry name" value="Proaerolysin, chain A, domain 2"/>
    <property type="match status" value="1"/>
</dbReference>
<dbReference type="Gene3D" id="2.170.15.10">
    <property type="entry name" value="Proaerolysin, chain A, domain 3"/>
    <property type="match status" value="1"/>
</dbReference>
<dbReference type="InterPro" id="IPR055267">
    <property type="entry name" value="Aerolysin-like_C"/>
</dbReference>
<dbReference type="InterPro" id="IPR005831">
    <property type="entry name" value="Aerolysin/haemolysin_CS"/>
</dbReference>
<dbReference type="InterPro" id="IPR005830">
    <property type="entry name" value="Aerolysn"/>
</dbReference>
<dbReference type="InterPro" id="IPR005138">
    <property type="entry name" value="APT_dom"/>
</dbReference>
<dbReference type="InterPro" id="IPR037015">
    <property type="entry name" value="APT_N_sf"/>
</dbReference>
<dbReference type="InterPro" id="IPR016187">
    <property type="entry name" value="CTDL_fold"/>
</dbReference>
<dbReference type="Pfam" id="PF01117">
    <property type="entry name" value="Aerolysin"/>
    <property type="match status" value="1"/>
</dbReference>
<dbReference type="Pfam" id="PF03440">
    <property type="entry name" value="APT"/>
    <property type="match status" value="1"/>
</dbReference>
<dbReference type="PRINTS" id="PR00754">
    <property type="entry name" value="AEROLYSIN"/>
</dbReference>
<dbReference type="SMART" id="SM00999">
    <property type="entry name" value="Aerolysin"/>
    <property type="match status" value="1"/>
</dbReference>
<dbReference type="SUPFAM" id="SSF56973">
    <property type="entry name" value="Aerolisin/ETX pore-forming domain"/>
    <property type="match status" value="1"/>
</dbReference>
<dbReference type="SUPFAM" id="SSF56436">
    <property type="entry name" value="C-type lectin-like"/>
    <property type="match status" value="1"/>
</dbReference>
<dbReference type="PROSITE" id="PS00274">
    <property type="entry name" value="AEROLYSIN"/>
    <property type="match status" value="1"/>
</dbReference>
<name>AERA_AERSO</name>
<protein>
    <recommendedName>
        <fullName>Aerolysin</fullName>
    </recommendedName>
    <alternativeName>
        <fullName>Hemolysin</fullName>
    </alternativeName>
</protein>
<sequence length="488" mass="53921">MMNRIITANLAFLASSLMLAQVQAAEPVYPDQVKWAGLGTGVCASGYRPLTRDEAMSIKGNLVSRMGQWQITGLADRWVIMGPGYNGEIKQGTAGETWCYPNSPVSGEIPTLSDWNIPAGDEVDVQWRLVHDNDYFIKPVSYLAHYLGYAWVGGNHSPYVGEDMDVTRVGDGWLIKGNNDGGCSGYRCGEKSSIKVSNFSYTLEPDSFSHGQVTESGKQLVKTITANATNYTDLPQQVVVTLKYDKATNWSKTDTYSLSEKVTTKNKFQWPLVGETELAIEIAASQSWASQKGGSTTETVSVEARPTVPPHSSLPVRVALYKSNISYPYEFKAEVNYDLTMKGFLRWGGNAWYTHPDNRPTWEHTLLLGPFRGQGEQHPLPVDKRYIPGEVKWWDWNWTISEYGLSTMQNNLGRVLRPIRSAVTGDFYAESQFAGDIEIGQPQTRSAKAAQLRSASAEEVALTSVDLDSEALANEGFGNVSLTIVPVQ</sequence>
<comment type="function">
    <text evidence="3">Secreted, cytolytic toxin that forms pores in host membranes after proteolytic removal of a C-terminal propeptide, leading to destruction of the membrane permeability barrier and cell death. The pores are formed by transmembrane beta-strands and are approximately 3 nm in diameter.</text>
</comment>
<comment type="subunit">
    <text evidence="1">Homodimer in solution; homoheptamer in the host membrane. After binding to GPI-anchored proteins in target membranes and proteolytic removal of the C-terminal propeptide, the protein assembles into a heptameric pre-pore complex. A further conformation change leads to insertion into the host membrane (By similarity).</text>
</comment>
<comment type="subcellular location">
    <subcellularLocation>
        <location evidence="3">Secreted</location>
    </subcellularLocation>
    <subcellularLocation>
        <location evidence="3">Host cell membrane</location>
    </subcellularLocation>
    <text>Secreted as a soluble precursor.</text>
</comment>
<comment type="domain">
    <text evidence="1">The C-terminal propeptide is required for normal protein folding and secretion; it maintains the aerolysin precursor in its soluble form and prevents premature heptamerization and pore formation.</text>
</comment>
<comment type="PTM">
    <text evidence="1">Proteolytic cleavage and subsequent release of the propeptide trigger a major conformation change, leading to the formation of a heptameric pre-pore that then inserts into the host membrane.</text>
</comment>
<comment type="similarity">
    <text evidence="4">Belongs to the aerolysin family.</text>
</comment>
<organism>
    <name type="scientific">Aeromonas sobria</name>
    <dbReference type="NCBI Taxonomy" id="646"/>
    <lineage>
        <taxon>Bacteria</taxon>
        <taxon>Pseudomonadati</taxon>
        <taxon>Pseudomonadota</taxon>
        <taxon>Gammaproteobacteria</taxon>
        <taxon>Aeromonadales</taxon>
        <taxon>Aeromonadaceae</taxon>
        <taxon>Aeromonas</taxon>
    </lineage>
</organism>
<keyword id="KW-0204">Cytolysis</keyword>
<keyword id="KW-1015">Disulfide bond</keyword>
<keyword id="KW-0354">Hemolysis</keyword>
<keyword id="KW-1032">Host cell membrane</keyword>
<keyword id="KW-1043">Host membrane</keyword>
<keyword id="KW-0472">Membrane</keyword>
<keyword id="KW-0964">Secreted</keyword>
<keyword id="KW-0732">Signal</keyword>
<keyword id="KW-0800">Toxin</keyword>
<keyword id="KW-0812">Transmembrane</keyword>
<keyword id="KW-1134">Transmembrane beta strand</keyword>
<keyword id="KW-0843">Virulence</keyword>
<feature type="signal peptide" evidence="2">
    <location>
        <begin position="1"/>
        <end position="24"/>
    </location>
</feature>
<feature type="chain" id="PRO_0000035630" description="Aerolysin">
    <location>
        <begin position="25"/>
        <end position="443"/>
    </location>
</feature>
<feature type="propeptide" id="PRO_0000035631" evidence="2">
    <location>
        <begin position="444"/>
        <end position="488"/>
    </location>
</feature>
<feature type="region of interest" description="Interaction with host N-linked glycan" evidence="1">
    <location>
        <begin position="69"/>
        <end position="85"/>
    </location>
</feature>
<feature type="region of interest" description="Part of the transmembrane beta-barrel after proteolytic activation of the toxin and insertion into the host membrane" evidence="1">
    <location>
        <begin position="256"/>
        <end position="288"/>
    </location>
</feature>
<feature type="region of interest" description="Interaction with glycans from host GPI-anchor" evidence="1">
    <location>
        <begin position="346"/>
        <end position="355"/>
    </location>
</feature>
<feature type="site" description="Important for oligomerization" evidence="1">
    <location>
        <position position="156"/>
    </location>
</feature>
<feature type="site" description="Important for heptamerization" evidence="1">
    <location>
        <position position="390"/>
    </location>
</feature>
<feature type="disulfide bond" evidence="1">
    <location>
        <begin position="43"/>
        <end position="99"/>
    </location>
</feature>
<feature type="disulfide bond" evidence="1">
    <location>
        <begin position="183"/>
        <end position="188"/>
    </location>
</feature>
<evidence type="ECO:0000250" key="1"/>
<evidence type="ECO:0000255" key="2"/>
<evidence type="ECO:0000269" key="3">
    <source>
    </source>
</evidence>
<evidence type="ECO:0000305" key="4"/>